<sequence>MSMQDPIADMLTRIRNGQAANKVAISMPSSKLKVAIASVLAEEGYVESFKVVEGSKPELEITLKYFQNKPVVESIQRVSRPGLRIYKRKDELPKVMGGLGIAVVSTSKGVMTDRAARQASLGGEIICYVA</sequence>
<protein>
    <recommendedName>
        <fullName evidence="1">Small ribosomal subunit protein uS8</fullName>
    </recommendedName>
    <alternativeName>
        <fullName evidence="2">30S ribosomal protein S8</fullName>
    </alternativeName>
</protein>
<name>RS8_GLAP5</name>
<accession>B8F6Q7</accession>
<organism>
    <name type="scientific">Glaesserella parasuis serovar 5 (strain SH0165)</name>
    <name type="common">Haemophilus parasuis</name>
    <dbReference type="NCBI Taxonomy" id="557723"/>
    <lineage>
        <taxon>Bacteria</taxon>
        <taxon>Pseudomonadati</taxon>
        <taxon>Pseudomonadota</taxon>
        <taxon>Gammaproteobacteria</taxon>
        <taxon>Pasteurellales</taxon>
        <taxon>Pasteurellaceae</taxon>
        <taxon>Glaesserella</taxon>
    </lineage>
</organism>
<proteinExistence type="inferred from homology"/>
<evidence type="ECO:0000255" key="1">
    <source>
        <dbReference type="HAMAP-Rule" id="MF_01302"/>
    </source>
</evidence>
<evidence type="ECO:0000305" key="2"/>
<gene>
    <name evidence="1" type="primary">rpsH</name>
    <name type="ordered locus">HAPS_1440</name>
</gene>
<feature type="chain" id="PRO_1000165334" description="Small ribosomal subunit protein uS8">
    <location>
        <begin position="1"/>
        <end position="130"/>
    </location>
</feature>
<keyword id="KW-1185">Reference proteome</keyword>
<keyword id="KW-0687">Ribonucleoprotein</keyword>
<keyword id="KW-0689">Ribosomal protein</keyword>
<keyword id="KW-0694">RNA-binding</keyword>
<keyword id="KW-0699">rRNA-binding</keyword>
<dbReference type="EMBL" id="CP001321">
    <property type="protein sequence ID" value="ACL33009.1"/>
    <property type="molecule type" value="Genomic_DNA"/>
</dbReference>
<dbReference type="RefSeq" id="WP_005711992.1">
    <property type="nucleotide sequence ID" value="NC_011852.1"/>
</dbReference>
<dbReference type="SMR" id="B8F6Q7"/>
<dbReference type="STRING" id="557723.HAPS_1440"/>
<dbReference type="GeneID" id="66617805"/>
<dbReference type="KEGG" id="hap:HAPS_1440"/>
<dbReference type="HOGENOM" id="CLU_098428_0_0_6"/>
<dbReference type="Proteomes" id="UP000006743">
    <property type="component" value="Chromosome"/>
</dbReference>
<dbReference type="GO" id="GO:1990904">
    <property type="term" value="C:ribonucleoprotein complex"/>
    <property type="evidence" value="ECO:0007669"/>
    <property type="project" value="UniProtKB-KW"/>
</dbReference>
<dbReference type="GO" id="GO:0005840">
    <property type="term" value="C:ribosome"/>
    <property type="evidence" value="ECO:0007669"/>
    <property type="project" value="UniProtKB-KW"/>
</dbReference>
<dbReference type="GO" id="GO:0019843">
    <property type="term" value="F:rRNA binding"/>
    <property type="evidence" value="ECO:0007669"/>
    <property type="project" value="UniProtKB-UniRule"/>
</dbReference>
<dbReference type="GO" id="GO:0003735">
    <property type="term" value="F:structural constituent of ribosome"/>
    <property type="evidence" value="ECO:0007669"/>
    <property type="project" value="InterPro"/>
</dbReference>
<dbReference type="GO" id="GO:0006412">
    <property type="term" value="P:translation"/>
    <property type="evidence" value="ECO:0007669"/>
    <property type="project" value="UniProtKB-UniRule"/>
</dbReference>
<dbReference type="FunFam" id="3.30.1370.30:FF:000003">
    <property type="entry name" value="30S ribosomal protein S8"/>
    <property type="match status" value="1"/>
</dbReference>
<dbReference type="FunFam" id="3.30.1490.10:FF:000001">
    <property type="entry name" value="30S ribosomal protein S8"/>
    <property type="match status" value="1"/>
</dbReference>
<dbReference type="Gene3D" id="3.30.1370.30">
    <property type="match status" value="1"/>
</dbReference>
<dbReference type="Gene3D" id="3.30.1490.10">
    <property type="match status" value="1"/>
</dbReference>
<dbReference type="HAMAP" id="MF_01302_B">
    <property type="entry name" value="Ribosomal_uS8_B"/>
    <property type="match status" value="1"/>
</dbReference>
<dbReference type="InterPro" id="IPR000630">
    <property type="entry name" value="Ribosomal_uS8"/>
</dbReference>
<dbReference type="InterPro" id="IPR047863">
    <property type="entry name" value="Ribosomal_uS8_CS"/>
</dbReference>
<dbReference type="InterPro" id="IPR035987">
    <property type="entry name" value="Ribosomal_uS8_sf"/>
</dbReference>
<dbReference type="NCBIfam" id="NF001109">
    <property type="entry name" value="PRK00136.1"/>
    <property type="match status" value="1"/>
</dbReference>
<dbReference type="PANTHER" id="PTHR11758">
    <property type="entry name" value="40S RIBOSOMAL PROTEIN S15A"/>
    <property type="match status" value="1"/>
</dbReference>
<dbReference type="Pfam" id="PF00410">
    <property type="entry name" value="Ribosomal_S8"/>
    <property type="match status" value="1"/>
</dbReference>
<dbReference type="SUPFAM" id="SSF56047">
    <property type="entry name" value="Ribosomal protein S8"/>
    <property type="match status" value="1"/>
</dbReference>
<dbReference type="PROSITE" id="PS00053">
    <property type="entry name" value="RIBOSOMAL_S8"/>
    <property type="match status" value="1"/>
</dbReference>
<reference key="1">
    <citation type="journal article" date="2009" name="J. Bacteriol.">
        <title>Complete genome sequence of Haemophilus parasuis SH0165.</title>
        <authorList>
            <person name="Yue M."/>
            <person name="Yang F."/>
            <person name="Yang J."/>
            <person name="Bei W."/>
            <person name="Cai X."/>
            <person name="Chen L."/>
            <person name="Dong J."/>
            <person name="Zhou R."/>
            <person name="Jin M."/>
            <person name="Jin Q."/>
            <person name="Chen H."/>
        </authorList>
    </citation>
    <scope>NUCLEOTIDE SEQUENCE [LARGE SCALE GENOMIC DNA]</scope>
    <source>
        <strain>SH0165</strain>
    </source>
</reference>
<comment type="function">
    <text evidence="1">One of the primary rRNA binding proteins, it binds directly to 16S rRNA central domain where it helps coordinate assembly of the platform of the 30S subunit.</text>
</comment>
<comment type="subunit">
    <text evidence="1">Part of the 30S ribosomal subunit. Contacts proteins S5 and S12.</text>
</comment>
<comment type="similarity">
    <text evidence="1">Belongs to the universal ribosomal protein uS8 family.</text>
</comment>